<evidence type="ECO:0000255" key="1">
    <source>
        <dbReference type="HAMAP-Rule" id="MF_01342"/>
    </source>
</evidence>
<evidence type="ECO:0000256" key="2">
    <source>
        <dbReference type="SAM" id="MobiDB-lite"/>
    </source>
</evidence>
<evidence type="ECO:0000305" key="3"/>
<accession>Q0SN22</accession>
<accession>G0ISC9</accession>
<sequence>MLSPKKVKYRKKQRGRLSGEAQKGNKISFGEYGLVSLETNFITARQIEAARIAMTRKIKRGGRVWIRIFPDIPYTKKPAETRMGKGKGGVDHWNAPVKLGTVMFEMAGVVEELAQEAMSLASSKLPVKTMFVVRRDLR</sequence>
<protein>
    <recommendedName>
        <fullName evidence="1">Large ribosomal subunit protein uL16</fullName>
    </recommendedName>
    <alternativeName>
        <fullName evidence="3">50S ribosomal protein L16</fullName>
    </alternativeName>
</protein>
<name>RL16_BORAP</name>
<reference key="1">
    <citation type="journal article" date="2006" name="BMC Genomics">
        <title>Comparative genome analysis: selection pressure on the Borrelia vls cassettes is essential for infectivity.</title>
        <authorList>
            <person name="Gloeckner G."/>
            <person name="Schulte-Spechtel U."/>
            <person name="Schilhabel M."/>
            <person name="Felder M."/>
            <person name="Suehnel J."/>
            <person name="Wilske B."/>
            <person name="Platzer M."/>
        </authorList>
    </citation>
    <scope>NUCLEOTIDE SEQUENCE [LARGE SCALE GENOMIC DNA]</scope>
    <source>
        <strain>PKo</strain>
    </source>
</reference>
<reference key="2">
    <citation type="journal article" date="2011" name="J. Bacteriol.">
        <title>Whole-genome sequences of two Borrelia afzelii and two Borrelia garinii Lyme disease agent isolates.</title>
        <authorList>
            <person name="Casjens S.R."/>
            <person name="Mongodin E.F."/>
            <person name="Qiu W.G."/>
            <person name="Dunn J.J."/>
            <person name="Luft B.J."/>
            <person name="Fraser-Liggett C.M."/>
            <person name="Schutzer S.E."/>
        </authorList>
    </citation>
    <scope>NUCLEOTIDE SEQUENCE [LARGE SCALE GENOMIC DNA]</scope>
    <source>
        <strain>PKo</strain>
    </source>
</reference>
<keyword id="KW-0687">Ribonucleoprotein</keyword>
<keyword id="KW-0689">Ribosomal protein</keyword>
<keyword id="KW-0694">RNA-binding</keyword>
<keyword id="KW-0699">rRNA-binding</keyword>
<keyword id="KW-0820">tRNA-binding</keyword>
<feature type="chain" id="PRO_1000054582" description="Large ribosomal subunit protein uL16">
    <location>
        <begin position="1"/>
        <end position="138"/>
    </location>
</feature>
<feature type="region of interest" description="Disordered" evidence="2">
    <location>
        <begin position="1"/>
        <end position="21"/>
    </location>
</feature>
<feature type="compositionally biased region" description="Basic residues" evidence="2">
    <location>
        <begin position="1"/>
        <end position="15"/>
    </location>
</feature>
<organism>
    <name type="scientific">Borreliella afzelii (strain PKo)</name>
    <name type="common">Borrelia afzelii</name>
    <dbReference type="NCBI Taxonomy" id="390236"/>
    <lineage>
        <taxon>Bacteria</taxon>
        <taxon>Pseudomonadati</taxon>
        <taxon>Spirochaetota</taxon>
        <taxon>Spirochaetia</taxon>
        <taxon>Spirochaetales</taxon>
        <taxon>Borreliaceae</taxon>
        <taxon>Borreliella</taxon>
    </lineage>
</organism>
<proteinExistence type="inferred from homology"/>
<gene>
    <name evidence="1" type="primary">rplP</name>
    <name type="ordered locus">BAPKO_0513</name>
    <name type="ordered locus">BafPKo_0502</name>
</gene>
<comment type="function">
    <text evidence="1">Binds 23S rRNA and is also seen to make contacts with the A and possibly P site tRNAs.</text>
</comment>
<comment type="subunit">
    <text evidence="1">Part of the 50S ribosomal subunit.</text>
</comment>
<comment type="similarity">
    <text evidence="1">Belongs to the universal ribosomal protein uL16 family.</text>
</comment>
<dbReference type="EMBL" id="CP000395">
    <property type="protein sequence ID" value="ABH01756.1"/>
    <property type="molecule type" value="Genomic_DNA"/>
</dbReference>
<dbReference type="EMBL" id="CP002933">
    <property type="protein sequence ID" value="AEL69710.1"/>
    <property type="molecule type" value="Genomic_DNA"/>
</dbReference>
<dbReference type="RefSeq" id="WP_004789534.1">
    <property type="nucleotide sequence ID" value="NZ_CP160066.1"/>
</dbReference>
<dbReference type="SMR" id="Q0SN22"/>
<dbReference type="STRING" id="29518.BLA32_01835"/>
<dbReference type="GeneID" id="77265332"/>
<dbReference type="KEGG" id="baf:BAPKO_0513"/>
<dbReference type="KEGG" id="bafz:BafPKo_0502"/>
<dbReference type="PATRIC" id="fig|390236.22.peg.482"/>
<dbReference type="eggNOG" id="COG0197">
    <property type="taxonomic scope" value="Bacteria"/>
</dbReference>
<dbReference type="HOGENOM" id="CLU_078858_2_1_12"/>
<dbReference type="OrthoDB" id="9802589at2"/>
<dbReference type="Proteomes" id="UP000005216">
    <property type="component" value="Chromosome"/>
</dbReference>
<dbReference type="GO" id="GO:0022625">
    <property type="term" value="C:cytosolic large ribosomal subunit"/>
    <property type="evidence" value="ECO:0007669"/>
    <property type="project" value="TreeGrafter"/>
</dbReference>
<dbReference type="GO" id="GO:0019843">
    <property type="term" value="F:rRNA binding"/>
    <property type="evidence" value="ECO:0007669"/>
    <property type="project" value="UniProtKB-UniRule"/>
</dbReference>
<dbReference type="GO" id="GO:0003735">
    <property type="term" value="F:structural constituent of ribosome"/>
    <property type="evidence" value="ECO:0007669"/>
    <property type="project" value="InterPro"/>
</dbReference>
<dbReference type="GO" id="GO:0000049">
    <property type="term" value="F:tRNA binding"/>
    <property type="evidence" value="ECO:0007669"/>
    <property type="project" value="UniProtKB-KW"/>
</dbReference>
<dbReference type="GO" id="GO:0006412">
    <property type="term" value="P:translation"/>
    <property type="evidence" value="ECO:0007669"/>
    <property type="project" value="UniProtKB-UniRule"/>
</dbReference>
<dbReference type="CDD" id="cd01433">
    <property type="entry name" value="Ribosomal_L16_L10e"/>
    <property type="match status" value="1"/>
</dbReference>
<dbReference type="FunFam" id="3.90.1170.10:FF:000001">
    <property type="entry name" value="50S ribosomal protein L16"/>
    <property type="match status" value="1"/>
</dbReference>
<dbReference type="Gene3D" id="3.90.1170.10">
    <property type="entry name" value="Ribosomal protein L10e/L16"/>
    <property type="match status" value="1"/>
</dbReference>
<dbReference type="HAMAP" id="MF_01342">
    <property type="entry name" value="Ribosomal_uL16"/>
    <property type="match status" value="1"/>
</dbReference>
<dbReference type="InterPro" id="IPR047873">
    <property type="entry name" value="Ribosomal_uL16"/>
</dbReference>
<dbReference type="InterPro" id="IPR000114">
    <property type="entry name" value="Ribosomal_uL16_bact-type"/>
</dbReference>
<dbReference type="InterPro" id="IPR020798">
    <property type="entry name" value="Ribosomal_uL16_CS"/>
</dbReference>
<dbReference type="InterPro" id="IPR016180">
    <property type="entry name" value="Ribosomal_uL16_dom"/>
</dbReference>
<dbReference type="InterPro" id="IPR036920">
    <property type="entry name" value="Ribosomal_uL16_sf"/>
</dbReference>
<dbReference type="NCBIfam" id="TIGR01164">
    <property type="entry name" value="rplP_bact"/>
    <property type="match status" value="1"/>
</dbReference>
<dbReference type="PANTHER" id="PTHR12220">
    <property type="entry name" value="50S/60S RIBOSOMAL PROTEIN L16"/>
    <property type="match status" value="1"/>
</dbReference>
<dbReference type="PANTHER" id="PTHR12220:SF13">
    <property type="entry name" value="LARGE RIBOSOMAL SUBUNIT PROTEIN UL16M"/>
    <property type="match status" value="1"/>
</dbReference>
<dbReference type="Pfam" id="PF00252">
    <property type="entry name" value="Ribosomal_L16"/>
    <property type="match status" value="1"/>
</dbReference>
<dbReference type="PRINTS" id="PR00060">
    <property type="entry name" value="RIBOSOMALL16"/>
</dbReference>
<dbReference type="SUPFAM" id="SSF54686">
    <property type="entry name" value="Ribosomal protein L16p/L10e"/>
    <property type="match status" value="1"/>
</dbReference>
<dbReference type="PROSITE" id="PS00586">
    <property type="entry name" value="RIBOSOMAL_L16_1"/>
    <property type="match status" value="1"/>
</dbReference>
<dbReference type="PROSITE" id="PS00701">
    <property type="entry name" value="RIBOSOMAL_L16_2"/>
    <property type="match status" value="1"/>
</dbReference>